<gene>
    <name evidence="1" type="primary">minC</name>
    <name type="ordered locus">VV1_0132</name>
</gene>
<organism>
    <name type="scientific">Vibrio vulnificus (strain CMCP6)</name>
    <dbReference type="NCBI Taxonomy" id="216895"/>
    <lineage>
        <taxon>Bacteria</taxon>
        <taxon>Pseudomonadati</taxon>
        <taxon>Pseudomonadota</taxon>
        <taxon>Gammaproteobacteria</taxon>
        <taxon>Vibrionales</taxon>
        <taxon>Vibrionaceae</taxon>
        <taxon>Vibrio</taxon>
    </lineage>
</organism>
<reference key="1">
    <citation type="submission" date="2002-12" db="EMBL/GenBank/DDBJ databases">
        <title>Complete genome sequence of Vibrio vulnificus CMCP6.</title>
        <authorList>
            <person name="Rhee J.H."/>
            <person name="Kim S.Y."/>
            <person name="Chung S.S."/>
            <person name="Kim J.J."/>
            <person name="Moon Y.H."/>
            <person name="Jeong H."/>
            <person name="Choy H.E."/>
        </authorList>
    </citation>
    <scope>NUCLEOTIDE SEQUENCE [LARGE SCALE GENOMIC DNA]</scope>
    <source>
        <strain>CMCP6</strain>
    </source>
</reference>
<feature type="chain" id="PRO_0000189070" description="Probable septum site-determining protein MinC">
    <location>
        <begin position="1"/>
        <end position="220"/>
    </location>
</feature>
<comment type="function">
    <text evidence="1">Cell division inhibitor that blocks the formation of polar Z ring septums. Rapidly oscillates between the poles of the cell to destabilize FtsZ filaments that have formed before they mature into polar Z rings. Prevents FtsZ polymerization.</text>
</comment>
<comment type="subunit">
    <text evidence="1">Interacts with MinD and FtsZ.</text>
</comment>
<comment type="similarity">
    <text evidence="1">Belongs to the MinC family.</text>
</comment>
<keyword id="KW-0131">Cell cycle</keyword>
<keyword id="KW-0132">Cell division</keyword>
<keyword id="KW-0717">Septation</keyword>
<accession>Q8DFS4</accession>
<sequence length="220" mass="23513">MSHSPDLKGSSFTLSVLHLCNNSVDTAIEFVKEKVEQAPAFFAAAPVVINIANVEGDLDFVALKQGISQAGFIPVGITGAKDKRTQNLASDAGFAIMSASKSPTQAPAKMAPTKIVRTPIRSGQQIYAKDGDLVILNHVSAGAEVIADGSIHIHGTLRGRAIAGASGQKEARIICHDLQAELISIAGNYWLSDQIERQFWQQKVMLSLVDESLHLEALTQ</sequence>
<dbReference type="EMBL" id="AE016795">
    <property type="protein sequence ID" value="AAO08670.1"/>
    <property type="molecule type" value="Genomic_DNA"/>
</dbReference>
<dbReference type="RefSeq" id="WP_011078249.1">
    <property type="nucleotide sequence ID" value="NC_004459.3"/>
</dbReference>
<dbReference type="SMR" id="Q8DFS4"/>
<dbReference type="KEGG" id="vvu:VV1_0132"/>
<dbReference type="HOGENOM" id="CLU_067812_0_1_6"/>
<dbReference type="Proteomes" id="UP000002275">
    <property type="component" value="Chromosome 1"/>
</dbReference>
<dbReference type="GO" id="GO:0000902">
    <property type="term" value="P:cell morphogenesis"/>
    <property type="evidence" value="ECO:0007669"/>
    <property type="project" value="InterPro"/>
</dbReference>
<dbReference type="GO" id="GO:0000917">
    <property type="term" value="P:division septum assembly"/>
    <property type="evidence" value="ECO:0007669"/>
    <property type="project" value="UniProtKB-KW"/>
</dbReference>
<dbReference type="GO" id="GO:0051302">
    <property type="term" value="P:regulation of cell division"/>
    <property type="evidence" value="ECO:0007669"/>
    <property type="project" value="InterPro"/>
</dbReference>
<dbReference type="GO" id="GO:1901891">
    <property type="term" value="P:regulation of cell septum assembly"/>
    <property type="evidence" value="ECO:0007669"/>
    <property type="project" value="InterPro"/>
</dbReference>
<dbReference type="Gene3D" id="2.160.20.70">
    <property type="match status" value="1"/>
</dbReference>
<dbReference type="Gene3D" id="3.30.70.260">
    <property type="match status" value="1"/>
</dbReference>
<dbReference type="HAMAP" id="MF_00267">
    <property type="entry name" value="MinC"/>
    <property type="match status" value="1"/>
</dbReference>
<dbReference type="InterPro" id="IPR016098">
    <property type="entry name" value="CAP/MinC_C"/>
</dbReference>
<dbReference type="InterPro" id="IPR013033">
    <property type="entry name" value="MinC"/>
</dbReference>
<dbReference type="InterPro" id="IPR036145">
    <property type="entry name" value="MinC_C_sf"/>
</dbReference>
<dbReference type="InterPro" id="IPR007874">
    <property type="entry name" value="MinC_N"/>
</dbReference>
<dbReference type="InterPro" id="IPR005526">
    <property type="entry name" value="Septum_form_inhib_MinC_C"/>
</dbReference>
<dbReference type="NCBIfam" id="TIGR01222">
    <property type="entry name" value="minC"/>
    <property type="match status" value="1"/>
</dbReference>
<dbReference type="PANTHER" id="PTHR34108">
    <property type="entry name" value="SEPTUM SITE-DETERMINING PROTEIN MINC"/>
    <property type="match status" value="1"/>
</dbReference>
<dbReference type="PANTHER" id="PTHR34108:SF1">
    <property type="entry name" value="SEPTUM SITE-DETERMINING PROTEIN MINC"/>
    <property type="match status" value="1"/>
</dbReference>
<dbReference type="Pfam" id="PF03775">
    <property type="entry name" value="MinC_C"/>
    <property type="match status" value="1"/>
</dbReference>
<dbReference type="Pfam" id="PF05209">
    <property type="entry name" value="MinC_N"/>
    <property type="match status" value="1"/>
</dbReference>
<dbReference type="SUPFAM" id="SSF63848">
    <property type="entry name" value="Cell-division inhibitor MinC, C-terminal domain"/>
    <property type="match status" value="1"/>
</dbReference>
<name>MINC_VIBVU</name>
<evidence type="ECO:0000255" key="1">
    <source>
        <dbReference type="HAMAP-Rule" id="MF_00267"/>
    </source>
</evidence>
<protein>
    <recommendedName>
        <fullName evidence="1">Probable septum site-determining protein MinC</fullName>
    </recommendedName>
</protein>
<proteinExistence type="inferred from homology"/>